<evidence type="ECO:0000250" key="1"/>
<evidence type="ECO:0000255" key="2">
    <source>
        <dbReference type="PROSITE-ProRule" id="PRU01081"/>
    </source>
</evidence>
<evidence type="ECO:0000269" key="3">
    <source>
    </source>
</evidence>
<evidence type="ECO:0000305" key="4"/>
<comment type="function">
    <text evidence="3">Aux/IAA proteins are short-lived transcriptional factors that function as repressors of early auxin response genes at low auxin concentrations. Repression is thought to result from the interaction with auxin response factors (ARFs), proteins that bind to the auxin-responsive promoter element (AuxRE). Formation of heterodimers with ARF proteins may alter their ability to modulate early auxin response genes expression.</text>
</comment>
<comment type="subunit">
    <text evidence="1">Homodimers and heterodimers.</text>
</comment>
<comment type="interaction">
    <interactant intactId="EBI-3946697">
        <id>Q93WC4</id>
    </interactant>
    <interactant intactId="EBI-529887">
        <id>Q8RYC8</id>
        <label>ARF19</label>
    </interactant>
    <organismsDiffer>false</organismsDiffer>
    <experiments>3</experiments>
</comment>
<comment type="interaction">
    <interactant intactId="EBI-3946697">
        <id>Q93WC4</id>
    </interactant>
    <interactant intactId="EBI-1799262">
        <id>Q94JM3</id>
        <label>ARF2</label>
    </interactant>
    <organismsDiffer>false</organismsDiffer>
    <experiments>6</experiments>
</comment>
<comment type="interaction">
    <interactant intactId="EBI-3946697">
        <id>Q93WC4</id>
    </interactant>
    <interactant intactId="EBI-3133404">
        <id>Q9XFM0</id>
        <label>IAA28</label>
    </interactant>
    <organismsDiffer>false</organismsDiffer>
    <experiments>5</experiments>
</comment>
<comment type="interaction">
    <interactant intactId="EBI-3946697">
        <id>Q93WC4</id>
    </interactant>
    <interactant intactId="EBI-4426144">
        <id>Q9C9L2</id>
        <label>TCP15</label>
    </interactant>
    <organismsDiffer>false</organismsDiffer>
    <experiments>3</experiments>
</comment>
<comment type="interaction">
    <interactant intactId="EBI-3946697">
        <id>Q93WC4</id>
    </interactant>
    <interactant intactId="EBI-1806701">
        <id>Q9LQW3</id>
        <label>ZHD14</label>
    </interactant>
    <organismsDiffer>false</organismsDiffer>
    <experiments>3</experiments>
</comment>
<comment type="interaction">
    <interactant intactId="EBI-3946697">
        <id>Q93WC4</id>
    </interactant>
    <interactant intactId="EBI-1806244">
        <id>O64722</id>
        <label>ZHD3</label>
    </interactant>
    <organismsDiffer>false</organismsDiffer>
    <experiments>3</experiments>
</comment>
<comment type="subcellular location">
    <subcellularLocation>
        <location evidence="1">Nucleus</location>
    </subcellularLocation>
</comment>
<comment type="induction">
    <text evidence="1">By auxin.</text>
</comment>
<comment type="domain">
    <text>The N-terminal half of the protein contains two conserved domains I and II. Domain I includes a slightly degenerated ERF-associated amphiphilic repression (EAR) motif which seems to be involved in the activity of transcriptional repression. Domain II is required for the correct degradation of the protein through the SCF-mediated ubiquitin-proteasome pathway. Interactions between Aux/IAA proteins and auxin response factors (ARFs) occur through their C-terminal dimerization domains III and IV.</text>
</comment>
<comment type="similarity">
    <text evidence="4">Belongs to the Aux/IAA family.</text>
</comment>
<comment type="sequence caution" evidence="4">
    <conflict type="frameshift">
        <sequence resource="EMBL-CDS" id="AAK55727"/>
    </conflict>
</comment>
<comment type="sequence caution" evidence="4">
    <conflict type="erroneous gene model prediction">
        <sequence resource="EMBL-CDS" id="CAA16962"/>
    </conflict>
    <text>The predicted gene At4g32280 has been split into 2 genes: At4g32280 and At4g32285.</text>
</comment>
<comment type="sequence caution" evidence="4">
    <conflict type="erroneous gene model prediction">
        <sequence resource="EMBL-CDS" id="CAB79946"/>
    </conflict>
    <text>The predicted gene At4g32280 has been split into 2 genes: At4g32280 and At4g32285.</text>
</comment>
<dbReference type="EMBL" id="AL021811">
    <property type="protein sequence ID" value="CAA16962.1"/>
    <property type="status" value="ALT_SEQ"/>
    <property type="molecule type" value="Genomic_DNA"/>
</dbReference>
<dbReference type="EMBL" id="AL161580">
    <property type="protein sequence ID" value="CAB79946.1"/>
    <property type="status" value="ALT_SEQ"/>
    <property type="molecule type" value="Genomic_DNA"/>
</dbReference>
<dbReference type="EMBL" id="CP002687">
    <property type="protein sequence ID" value="AEE86032.1"/>
    <property type="molecule type" value="Genomic_DNA"/>
</dbReference>
<dbReference type="EMBL" id="AF380646">
    <property type="protein sequence ID" value="AAK55727.1"/>
    <property type="status" value="ALT_FRAME"/>
    <property type="molecule type" value="mRNA"/>
</dbReference>
<dbReference type="EMBL" id="AY054137">
    <property type="protein sequence ID" value="AAL06798.1"/>
    <property type="molecule type" value="mRNA"/>
</dbReference>
<dbReference type="PIR" id="T05400">
    <property type="entry name" value="T05400"/>
</dbReference>
<dbReference type="RefSeq" id="NP_567891.1">
    <property type="nucleotide sequence ID" value="NM_119380.3"/>
</dbReference>
<dbReference type="SMR" id="Q93WC4"/>
<dbReference type="BioGRID" id="14647">
    <property type="interactions" value="21"/>
</dbReference>
<dbReference type="FunCoup" id="Q93WC4">
    <property type="interactions" value="301"/>
</dbReference>
<dbReference type="IntAct" id="Q93WC4">
    <property type="interactions" value="17"/>
</dbReference>
<dbReference type="STRING" id="3702.Q93WC4"/>
<dbReference type="iPTMnet" id="Q93WC4"/>
<dbReference type="PaxDb" id="3702-AT4G32280.1"/>
<dbReference type="EnsemblPlants" id="AT4G32280.1">
    <property type="protein sequence ID" value="AT4G32280.1"/>
    <property type="gene ID" value="AT4G32280"/>
</dbReference>
<dbReference type="GeneID" id="829361"/>
<dbReference type="Gramene" id="AT4G32280.1">
    <property type="protein sequence ID" value="AT4G32280.1"/>
    <property type="gene ID" value="AT4G32280"/>
</dbReference>
<dbReference type="KEGG" id="ath:AT4G32280"/>
<dbReference type="Araport" id="AT4G32280"/>
<dbReference type="TAIR" id="AT4G32280">
    <property type="gene designation" value="IAA29"/>
</dbReference>
<dbReference type="eggNOG" id="ENOG502S29N">
    <property type="taxonomic scope" value="Eukaryota"/>
</dbReference>
<dbReference type="HOGENOM" id="CLU_049393_4_0_1"/>
<dbReference type="InParanoid" id="Q93WC4"/>
<dbReference type="OMA" id="PWQTFIK"/>
<dbReference type="OrthoDB" id="778717at2759"/>
<dbReference type="PhylomeDB" id="Q93WC4"/>
<dbReference type="PRO" id="PR:Q93WC4"/>
<dbReference type="Proteomes" id="UP000006548">
    <property type="component" value="Chromosome 4"/>
</dbReference>
<dbReference type="ExpressionAtlas" id="Q93WC4">
    <property type="expression patterns" value="baseline and differential"/>
</dbReference>
<dbReference type="GO" id="GO:0005634">
    <property type="term" value="C:nucleus"/>
    <property type="evidence" value="ECO:0007669"/>
    <property type="project" value="UniProtKB-SubCell"/>
</dbReference>
<dbReference type="GO" id="GO:0003700">
    <property type="term" value="F:DNA-binding transcription factor activity"/>
    <property type="evidence" value="ECO:0000250"/>
    <property type="project" value="TAIR"/>
</dbReference>
<dbReference type="GO" id="GO:0009734">
    <property type="term" value="P:auxin-activated signaling pathway"/>
    <property type="evidence" value="ECO:0007669"/>
    <property type="project" value="UniProtKB-KW"/>
</dbReference>
<dbReference type="GO" id="GO:0009733">
    <property type="term" value="P:response to auxin"/>
    <property type="evidence" value="ECO:0000304"/>
    <property type="project" value="TAIR"/>
</dbReference>
<dbReference type="GO" id="GO:0010583">
    <property type="term" value="P:response to cyclopentenone"/>
    <property type="evidence" value="ECO:0000270"/>
    <property type="project" value="TAIR"/>
</dbReference>
<dbReference type="GO" id="GO:0010218">
    <property type="term" value="P:response to far red light"/>
    <property type="evidence" value="ECO:0000270"/>
    <property type="project" value="TAIR"/>
</dbReference>
<dbReference type="GO" id="GO:0009635">
    <property type="term" value="P:response to herbicide"/>
    <property type="evidence" value="ECO:0000270"/>
    <property type="project" value="TAIR"/>
</dbReference>
<dbReference type="GO" id="GO:0010114">
    <property type="term" value="P:response to red light"/>
    <property type="evidence" value="ECO:0000270"/>
    <property type="project" value="TAIR"/>
</dbReference>
<dbReference type="Gene3D" id="3.10.20.90">
    <property type="entry name" value="Phosphatidylinositol 3-kinase Catalytic Subunit, Chain A, domain 1"/>
    <property type="match status" value="1"/>
</dbReference>
<dbReference type="InterPro" id="IPR033389">
    <property type="entry name" value="AUX/IAA_dom"/>
</dbReference>
<dbReference type="InterPro" id="IPR003311">
    <property type="entry name" value="AUX_IAA"/>
</dbReference>
<dbReference type="InterPro" id="IPR053793">
    <property type="entry name" value="PB1-like"/>
</dbReference>
<dbReference type="PANTHER" id="PTHR31734">
    <property type="entry name" value="AUXIN-RESPONSIVE PROTEIN IAA17"/>
    <property type="match status" value="1"/>
</dbReference>
<dbReference type="PANTHER" id="PTHR31734:SF38">
    <property type="entry name" value="AUXIN-RESPONSIVE PROTEIN IAA29"/>
    <property type="match status" value="1"/>
</dbReference>
<dbReference type="Pfam" id="PF02309">
    <property type="entry name" value="AUX_IAA"/>
    <property type="match status" value="2"/>
</dbReference>
<dbReference type="SUPFAM" id="SSF54277">
    <property type="entry name" value="CAD &amp; PB1 domains"/>
    <property type="match status" value="1"/>
</dbReference>
<dbReference type="PROSITE" id="PS51745">
    <property type="entry name" value="PB1"/>
    <property type="match status" value="1"/>
</dbReference>
<reference key="1">
    <citation type="journal article" date="1999" name="Nature">
        <title>Sequence and analysis of chromosome 4 of the plant Arabidopsis thaliana.</title>
        <authorList>
            <person name="Mayer K.F.X."/>
            <person name="Schueller C."/>
            <person name="Wambutt R."/>
            <person name="Murphy G."/>
            <person name="Volckaert G."/>
            <person name="Pohl T."/>
            <person name="Duesterhoeft A."/>
            <person name="Stiekema W."/>
            <person name="Entian K.-D."/>
            <person name="Terryn N."/>
            <person name="Harris B."/>
            <person name="Ansorge W."/>
            <person name="Brandt P."/>
            <person name="Grivell L.A."/>
            <person name="Rieger M."/>
            <person name="Weichselgartner M."/>
            <person name="de Simone V."/>
            <person name="Obermaier B."/>
            <person name="Mache R."/>
            <person name="Mueller M."/>
            <person name="Kreis M."/>
            <person name="Delseny M."/>
            <person name="Puigdomenech P."/>
            <person name="Watson M."/>
            <person name="Schmidtheini T."/>
            <person name="Reichert B."/>
            <person name="Portetelle D."/>
            <person name="Perez-Alonso M."/>
            <person name="Boutry M."/>
            <person name="Bancroft I."/>
            <person name="Vos P."/>
            <person name="Hoheisel J."/>
            <person name="Zimmermann W."/>
            <person name="Wedler H."/>
            <person name="Ridley P."/>
            <person name="Langham S.-A."/>
            <person name="McCullagh B."/>
            <person name="Bilham L."/>
            <person name="Robben J."/>
            <person name="van der Schueren J."/>
            <person name="Grymonprez B."/>
            <person name="Chuang Y.-J."/>
            <person name="Vandenbussche F."/>
            <person name="Braeken M."/>
            <person name="Weltjens I."/>
            <person name="Voet M."/>
            <person name="Bastiaens I."/>
            <person name="Aert R."/>
            <person name="Defoor E."/>
            <person name="Weitzenegger T."/>
            <person name="Bothe G."/>
            <person name="Ramsperger U."/>
            <person name="Hilbert H."/>
            <person name="Braun M."/>
            <person name="Holzer E."/>
            <person name="Brandt A."/>
            <person name="Peters S."/>
            <person name="van Staveren M."/>
            <person name="Dirkse W."/>
            <person name="Mooijman P."/>
            <person name="Klein Lankhorst R."/>
            <person name="Rose M."/>
            <person name="Hauf J."/>
            <person name="Koetter P."/>
            <person name="Berneiser S."/>
            <person name="Hempel S."/>
            <person name="Feldpausch M."/>
            <person name="Lamberth S."/>
            <person name="Van den Daele H."/>
            <person name="De Keyser A."/>
            <person name="Buysshaert C."/>
            <person name="Gielen J."/>
            <person name="Villarroel R."/>
            <person name="De Clercq R."/>
            <person name="van Montagu M."/>
            <person name="Rogers J."/>
            <person name="Cronin A."/>
            <person name="Quail M.A."/>
            <person name="Bray-Allen S."/>
            <person name="Clark L."/>
            <person name="Doggett J."/>
            <person name="Hall S."/>
            <person name="Kay M."/>
            <person name="Lennard N."/>
            <person name="McLay K."/>
            <person name="Mayes R."/>
            <person name="Pettett A."/>
            <person name="Rajandream M.A."/>
            <person name="Lyne M."/>
            <person name="Benes V."/>
            <person name="Rechmann S."/>
            <person name="Borkova D."/>
            <person name="Bloecker H."/>
            <person name="Scharfe M."/>
            <person name="Grimm M."/>
            <person name="Loehnert T.-H."/>
            <person name="Dose S."/>
            <person name="de Haan M."/>
            <person name="Maarse A.C."/>
            <person name="Schaefer M."/>
            <person name="Mueller-Auer S."/>
            <person name="Gabel C."/>
            <person name="Fuchs M."/>
            <person name="Fartmann B."/>
            <person name="Granderath K."/>
            <person name="Dauner D."/>
            <person name="Herzl A."/>
            <person name="Neumann S."/>
            <person name="Argiriou A."/>
            <person name="Vitale D."/>
            <person name="Liguori R."/>
            <person name="Piravandi E."/>
            <person name="Massenet O."/>
            <person name="Quigley F."/>
            <person name="Clabauld G."/>
            <person name="Muendlein A."/>
            <person name="Felber R."/>
            <person name="Schnabl S."/>
            <person name="Hiller R."/>
            <person name="Schmidt W."/>
            <person name="Lecharny A."/>
            <person name="Aubourg S."/>
            <person name="Chefdor F."/>
            <person name="Cooke R."/>
            <person name="Berger C."/>
            <person name="Monfort A."/>
            <person name="Casacuberta E."/>
            <person name="Gibbons T."/>
            <person name="Weber N."/>
            <person name="Vandenbol M."/>
            <person name="Bargues M."/>
            <person name="Terol J."/>
            <person name="Torres A."/>
            <person name="Perez-Perez A."/>
            <person name="Purnelle B."/>
            <person name="Bent E."/>
            <person name="Johnson S."/>
            <person name="Tacon D."/>
            <person name="Jesse T."/>
            <person name="Heijnen L."/>
            <person name="Schwarz S."/>
            <person name="Scholler P."/>
            <person name="Heber S."/>
            <person name="Francs P."/>
            <person name="Bielke C."/>
            <person name="Frishman D."/>
            <person name="Haase D."/>
            <person name="Lemcke K."/>
            <person name="Mewes H.-W."/>
            <person name="Stocker S."/>
            <person name="Zaccaria P."/>
            <person name="Bevan M."/>
            <person name="Wilson R.K."/>
            <person name="de la Bastide M."/>
            <person name="Habermann K."/>
            <person name="Parnell L."/>
            <person name="Dedhia N."/>
            <person name="Gnoj L."/>
            <person name="Schutz K."/>
            <person name="Huang E."/>
            <person name="Spiegel L."/>
            <person name="Sekhon M."/>
            <person name="Murray J."/>
            <person name="Sheet P."/>
            <person name="Cordes M."/>
            <person name="Abu-Threideh J."/>
            <person name="Stoneking T."/>
            <person name="Kalicki J."/>
            <person name="Graves T."/>
            <person name="Harmon G."/>
            <person name="Edwards J."/>
            <person name="Latreille P."/>
            <person name="Courtney L."/>
            <person name="Cloud J."/>
            <person name="Abbott A."/>
            <person name="Scott K."/>
            <person name="Johnson D."/>
            <person name="Minx P."/>
            <person name="Bentley D."/>
            <person name="Fulton B."/>
            <person name="Miller N."/>
            <person name="Greco T."/>
            <person name="Kemp K."/>
            <person name="Kramer J."/>
            <person name="Fulton L."/>
            <person name="Mardis E."/>
            <person name="Dante M."/>
            <person name="Pepin K."/>
            <person name="Hillier L.W."/>
            <person name="Nelson J."/>
            <person name="Spieth J."/>
            <person name="Ryan E."/>
            <person name="Andrews S."/>
            <person name="Geisel C."/>
            <person name="Layman D."/>
            <person name="Du H."/>
            <person name="Ali J."/>
            <person name="Berghoff A."/>
            <person name="Jones K."/>
            <person name="Drone K."/>
            <person name="Cotton M."/>
            <person name="Joshu C."/>
            <person name="Antonoiu B."/>
            <person name="Zidanic M."/>
            <person name="Strong C."/>
            <person name="Sun H."/>
            <person name="Lamar B."/>
            <person name="Yordan C."/>
            <person name="Ma P."/>
            <person name="Zhong J."/>
            <person name="Preston R."/>
            <person name="Vil D."/>
            <person name="Shekher M."/>
            <person name="Matero A."/>
            <person name="Shah R."/>
            <person name="Swaby I.K."/>
            <person name="O'Shaughnessy A."/>
            <person name="Rodriguez M."/>
            <person name="Hoffman J."/>
            <person name="Till S."/>
            <person name="Granat S."/>
            <person name="Shohdy N."/>
            <person name="Hasegawa A."/>
            <person name="Hameed A."/>
            <person name="Lodhi M."/>
            <person name="Johnson A."/>
            <person name="Chen E."/>
            <person name="Marra M.A."/>
            <person name="Martienssen R."/>
            <person name="McCombie W.R."/>
        </authorList>
    </citation>
    <scope>NUCLEOTIDE SEQUENCE [LARGE SCALE GENOMIC DNA]</scope>
    <source>
        <strain>cv. Columbia</strain>
    </source>
</reference>
<reference key="2">
    <citation type="journal article" date="2017" name="Plant J.">
        <title>Araport11: a complete reannotation of the Arabidopsis thaliana reference genome.</title>
        <authorList>
            <person name="Cheng C.Y."/>
            <person name="Krishnakumar V."/>
            <person name="Chan A.P."/>
            <person name="Thibaud-Nissen F."/>
            <person name="Schobel S."/>
            <person name="Town C.D."/>
        </authorList>
    </citation>
    <scope>GENOME REANNOTATION</scope>
    <source>
        <strain>cv. Columbia</strain>
    </source>
</reference>
<reference key="3">
    <citation type="journal article" date="2003" name="Science">
        <title>Empirical analysis of transcriptional activity in the Arabidopsis genome.</title>
        <authorList>
            <person name="Yamada K."/>
            <person name="Lim J."/>
            <person name="Dale J.M."/>
            <person name="Chen H."/>
            <person name="Shinn P."/>
            <person name="Palm C.J."/>
            <person name="Southwick A.M."/>
            <person name="Wu H.C."/>
            <person name="Kim C.J."/>
            <person name="Nguyen M."/>
            <person name="Pham P.K."/>
            <person name="Cheuk R.F."/>
            <person name="Karlin-Newmann G."/>
            <person name="Liu S.X."/>
            <person name="Lam B."/>
            <person name="Sakano H."/>
            <person name="Wu T."/>
            <person name="Yu G."/>
            <person name="Miranda M."/>
            <person name="Quach H.L."/>
            <person name="Tripp M."/>
            <person name="Chang C.H."/>
            <person name="Lee J.M."/>
            <person name="Toriumi M.J."/>
            <person name="Chan M.M."/>
            <person name="Tang C.C."/>
            <person name="Onodera C.S."/>
            <person name="Deng J.M."/>
            <person name="Akiyama K."/>
            <person name="Ansari Y."/>
            <person name="Arakawa T."/>
            <person name="Banh J."/>
            <person name="Banno F."/>
            <person name="Bowser L."/>
            <person name="Brooks S.Y."/>
            <person name="Carninci P."/>
            <person name="Chao Q."/>
            <person name="Choy N."/>
            <person name="Enju A."/>
            <person name="Goldsmith A.D."/>
            <person name="Gurjal M."/>
            <person name="Hansen N.F."/>
            <person name="Hayashizaki Y."/>
            <person name="Johnson-Hopson C."/>
            <person name="Hsuan V.W."/>
            <person name="Iida K."/>
            <person name="Karnes M."/>
            <person name="Khan S."/>
            <person name="Koesema E."/>
            <person name="Ishida J."/>
            <person name="Jiang P.X."/>
            <person name="Jones T."/>
            <person name="Kawai J."/>
            <person name="Kamiya A."/>
            <person name="Meyers C."/>
            <person name="Nakajima M."/>
            <person name="Narusaka M."/>
            <person name="Seki M."/>
            <person name="Sakurai T."/>
            <person name="Satou M."/>
            <person name="Tamse R."/>
            <person name="Vaysberg M."/>
            <person name="Wallender E.K."/>
            <person name="Wong C."/>
            <person name="Yamamura Y."/>
            <person name="Yuan S."/>
            <person name="Shinozaki K."/>
            <person name="Davis R.W."/>
            <person name="Theologis A."/>
            <person name="Ecker J.R."/>
        </authorList>
    </citation>
    <scope>NUCLEOTIDE SEQUENCE [LARGE SCALE MRNA]</scope>
    <source>
        <strain>cv. Columbia</strain>
    </source>
</reference>
<reference key="4">
    <citation type="journal article" date="2002" name="Plant Mol. Biol.">
        <title>Genetics of Aux/IAA and ARF action in plant growth and development.</title>
        <authorList>
            <person name="Liscum E."/>
            <person name="Reed J.W."/>
        </authorList>
    </citation>
    <scope>GENE FAMILY</scope>
    <scope>NOMENCLATURE</scope>
    <scope>FUNCTION</scope>
</reference>
<reference key="5">
    <citation type="journal article" date="2004" name="Plant Cell">
        <title>Aux/IAA proteins contain a potent transcriptional repression domain.</title>
        <authorList>
            <person name="Tiwari S.B."/>
            <person name="Hagen G."/>
            <person name="Guilfoyle T.J."/>
        </authorList>
    </citation>
    <scope>TRANSCRIPTIONAL REPRESSION DOMAIN</scope>
</reference>
<organism>
    <name type="scientific">Arabidopsis thaliana</name>
    <name type="common">Mouse-ear cress</name>
    <dbReference type="NCBI Taxonomy" id="3702"/>
    <lineage>
        <taxon>Eukaryota</taxon>
        <taxon>Viridiplantae</taxon>
        <taxon>Streptophyta</taxon>
        <taxon>Embryophyta</taxon>
        <taxon>Tracheophyta</taxon>
        <taxon>Spermatophyta</taxon>
        <taxon>Magnoliopsida</taxon>
        <taxon>eudicotyledons</taxon>
        <taxon>Gunneridae</taxon>
        <taxon>Pentapetalae</taxon>
        <taxon>rosids</taxon>
        <taxon>malvids</taxon>
        <taxon>Brassicales</taxon>
        <taxon>Brassicaceae</taxon>
        <taxon>Camelineae</taxon>
        <taxon>Arabidopsis</taxon>
    </lineage>
</organism>
<proteinExistence type="evidence at protein level"/>
<name>IAA29_ARATH</name>
<keyword id="KW-0927">Auxin signaling pathway</keyword>
<keyword id="KW-0539">Nucleus</keyword>
<keyword id="KW-1185">Reference proteome</keyword>
<keyword id="KW-0678">Repressor</keyword>
<keyword id="KW-0804">Transcription</keyword>
<keyword id="KW-0805">Transcription regulation</keyword>
<gene>
    <name type="primary">IAA29</name>
    <name type="ordered locus">At4g32280</name>
    <name type="ORF">F10M6.80</name>
</gene>
<feature type="chain" id="PRO_0000112855" description="Auxin-responsive protein IAA29">
    <location>
        <begin position="1"/>
        <end position="251"/>
    </location>
</feature>
<feature type="domain" description="PB1" evidence="2">
    <location>
        <begin position="159"/>
        <end position="246"/>
    </location>
</feature>
<feature type="short sequence motif" description="EAR-like (transcriptional repression)">
    <location>
        <begin position="3"/>
        <end position="7"/>
    </location>
</feature>
<protein>
    <recommendedName>
        <fullName>Auxin-responsive protein IAA29</fullName>
    </recommendedName>
    <alternativeName>
        <fullName>Indoleacetic acid-induced protein 29</fullName>
    </alternativeName>
</protein>
<sequence>MELDLGLSLSPHKSSKLGFNFDLNKHCAIEGAASCLGTEKLRFEATFGLGNVEENCYMPKQRLFALNGQPNEEDEDPLESESSIVYDDEEENSEVVGWPPVKTCMIKYGSYHHRHIRNHHHCPYHHRGRRITAMNNNISNPTTATVGSSSSSSISSRSSMYVKVKMDGVAIARKVDIKLFNSYESLTNSLITMFTEYEDCDREDTNYTFTFQGKEGDWLLRGDVTWKIFAESVHRISIIRDRPCAYTRCLF</sequence>
<accession>Q93WC4</accession>
<accession>O49363</accession>